<feature type="chain" id="PRO_1000148353" description="Preprotein translocase subunit SecG">
    <location>
        <begin position="1"/>
        <end position="54"/>
    </location>
</feature>
<feature type="topological domain" description="Cytoplasmic" evidence="1">
    <location>
        <begin position="1"/>
        <end position="31"/>
    </location>
</feature>
<feature type="transmembrane region" description="Helical" evidence="1">
    <location>
        <begin position="32"/>
        <end position="53"/>
    </location>
</feature>
<feature type="topological domain" description="Extracellular" evidence="1">
    <location>
        <position position="54"/>
    </location>
</feature>
<accession>B9LSC9</accession>
<protein>
    <recommendedName>
        <fullName evidence="1">Preprotein translocase subunit SecG</fullName>
    </recommendedName>
    <alternativeName>
        <fullName evidence="1">Protein transport protein Sec61 subunit beta homolog</fullName>
    </alternativeName>
</protein>
<organism>
    <name type="scientific">Halorubrum lacusprofundi (strain ATCC 49239 / DSM 5036 / JCM 8891 / ACAM 34)</name>
    <dbReference type="NCBI Taxonomy" id="416348"/>
    <lineage>
        <taxon>Archaea</taxon>
        <taxon>Methanobacteriati</taxon>
        <taxon>Methanobacteriota</taxon>
        <taxon>Stenosarchaea group</taxon>
        <taxon>Halobacteria</taxon>
        <taxon>Halobacteriales</taxon>
        <taxon>Haloferacaceae</taxon>
        <taxon>Halorubrum</taxon>
    </lineage>
</organism>
<keyword id="KW-1003">Cell membrane</keyword>
<keyword id="KW-0472">Membrane</keyword>
<keyword id="KW-0653">Protein transport</keyword>
<keyword id="KW-1185">Reference proteome</keyword>
<keyword id="KW-0811">Translocation</keyword>
<keyword id="KW-0812">Transmembrane</keyword>
<keyword id="KW-1133">Transmembrane helix</keyword>
<keyword id="KW-0813">Transport</keyword>
<sequence>MSSGSNSGGLMSSAGLVRYFDSEDRDAIAIDPKTVLAFCVLFGVFVQILSLTVA</sequence>
<comment type="function">
    <text evidence="1">Involved in protein export. The function of the beta subunit is unknown, but it may be involved in stabilization of the trimeric complex.</text>
</comment>
<comment type="subunit">
    <text evidence="1">Component of the protein translocase complex. Heterotrimer consisting of alpha (SecY), beta (SecG) and gamma (SecE) subunits. Can form oligomers of the heterotrimer.</text>
</comment>
<comment type="subcellular location">
    <subcellularLocation>
        <location evidence="1">Cell membrane</location>
        <topology evidence="1">Single-pass membrane protein</topology>
    </subcellularLocation>
</comment>
<comment type="similarity">
    <text evidence="1">Belongs to the SEC61-beta family.</text>
</comment>
<name>SECG_HALLT</name>
<gene>
    <name evidence="1" type="primary">secG</name>
    <name type="ordered locus">Hlac_0371</name>
</gene>
<dbReference type="EMBL" id="CP001365">
    <property type="protein sequence ID" value="ACM55974.1"/>
    <property type="molecule type" value="Genomic_DNA"/>
</dbReference>
<dbReference type="RefSeq" id="WP_004049141.1">
    <property type="nucleotide sequence ID" value="NC_012029.1"/>
</dbReference>
<dbReference type="GeneID" id="7399764"/>
<dbReference type="KEGG" id="hla:Hlac_0371"/>
<dbReference type="eggNOG" id="arCOG02957">
    <property type="taxonomic scope" value="Archaea"/>
</dbReference>
<dbReference type="HOGENOM" id="CLU_208205_0_0_2"/>
<dbReference type="Proteomes" id="UP000000740">
    <property type="component" value="Chromosome 1"/>
</dbReference>
<dbReference type="GO" id="GO:0005886">
    <property type="term" value="C:plasma membrane"/>
    <property type="evidence" value="ECO:0007669"/>
    <property type="project" value="UniProtKB-SubCell"/>
</dbReference>
<dbReference type="GO" id="GO:0015031">
    <property type="term" value="P:protein transport"/>
    <property type="evidence" value="ECO:0007669"/>
    <property type="project" value="UniProtKB-UniRule"/>
</dbReference>
<dbReference type="HAMAP" id="MF_00751">
    <property type="entry name" value="SecG"/>
    <property type="match status" value="1"/>
</dbReference>
<dbReference type="InterPro" id="IPR023531">
    <property type="entry name" value="Preprot_translocase_SecG"/>
</dbReference>
<dbReference type="InterPro" id="IPR016482">
    <property type="entry name" value="SecG/Sec61-beta/Sbh"/>
</dbReference>
<dbReference type="NCBIfam" id="NF002318">
    <property type="entry name" value="PRK01253.1"/>
    <property type="match status" value="1"/>
</dbReference>
<dbReference type="Pfam" id="PF03911">
    <property type="entry name" value="Sec61_beta"/>
    <property type="match status" value="1"/>
</dbReference>
<evidence type="ECO:0000255" key="1">
    <source>
        <dbReference type="HAMAP-Rule" id="MF_00751"/>
    </source>
</evidence>
<proteinExistence type="inferred from homology"/>
<reference key="1">
    <citation type="journal article" date="2016" name="Stand. Genomic Sci.">
        <title>Complete genome sequence of the Antarctic Halorubrum lacusprofundi type strain ACAM 34.</title>
        <authorList>
            <person name="Anderson I.J."/>
            <person name="DasSarma P."/>
            <person name="Lucas S."/>
            <person name="Copeland A."/>
            <person name="Lapidus A."/>
            <person name="Del Rio T.G."/>
            <person name="Tice H."/>
            <person name="Dalin E."/>
            <person name="Bruce D.C."/>
            <person name="Goodwin L."/>
            <person name="Pitluck S."/>
            <person name="Sims D."/>
            <person name="Brettin T.S."/>
            <person name="Detter J.C."/>
            <person name="Han C.S."/>
            <person name="Larimer F."/>
            <person name="Hauser L."/>
            <person name="Land M."/>
            <person name="Ivanova N."/>
            <person name="Richardson P."/>
            <person name="Cavicchioli R."/>
            <person name="DasSarma S."/>
            <person name="Woese C.R."/>
            <person name="Kyrpides N.C."/>
        </authorList>
    </citation>
    <scope>NUCLEOTIDE SEQUENCE [LARGE SCALE GENOMIC DNA]</scope>
    <source>
        <strain>ATCC 49239 / DSM 5036 / JCM 8891 / ACAM 34</strain>
    </source>
</reference>